<reference key="1">
    <citation type="journal article" date="2008" name="PLoS ONE">
        <title>An optimized chloroplast DNA extraction protocol for grasses (Poaceae) proves suitable for whole plastid genome sequencing and SNP detection.</title>
        <authorList>
            <person name="Diekmann K."/>
            <person name="Hodkinson T.R."/>
            <person name="Fricke E."/>
            <person name="Barth S."/>
        </authorList>
    </citation>
    <scope>NUCLEOTIDE SEQUENCE [LARGE SCALE GENOMIC DNA]</scope>
    <source>
        <strain>cv. Cashel</strain>
    </source>
</reference>
<organism>
    <name type="scientific">Lolium perenne</name>
    <name type="common">Perennial ryegrass</name>
    <dbReference type="NCBI Taxonomy" id="4522"/>
    <lineage>
        <taxon>Eukaryota</taxon>
        <taxon>Viridiplantae</taxon>
        <taxon>Streptophyta</taxon>
        <taxon>Embryophyta</taxon>
        <taxon>Tracheophyta</taxon>
        <taxon>Spermatophyta</taxon>
        <taxon>Magnoliopsida</taxon>
        <taxon>Liliopsida</taxon>
        <taxon>Poales</taxon>
        <taxon>Poaceae</taxon>
        <taxon>BOP clade</taxon>
        <taxon>Pooideae</taxon>
        <taxon>Poodae</taxon>
        <taxon>Poeae</taxon>
        <taxon>Poeae Chloroplast Group 2 (Poeae type)</taxon>
        <taxon>Loliodinae</taxon>
        <taxon>Loliinae</taxon>
        <taxon>Lolium</taxon>
    </lineage>
</organism>
<keyword id="KW-0150">Chloroplast</keyword>
<keyword id="KW-0249">Electron transport</keyword>
<keyword id="KW-0472">Membrane</keyword>
<keyword id="KW-0602">Photosynthesis</keyword>
<keyword id="KW-0934">Plastid</keyword>
<keyword id="KW-0793">Thylakoid</keyword>
<keyword id="KW-0812">Transmembrane</keyword>
<keyword id="KW-1133">Transmembrane helix</keyword>
<keyword id="KW-0813">Transport</keyword>
<geneLocation type="chloroplast"/>
<proteinExistence type="inferred from homology"/>
<evidence type="ECO:0000255" key="1">
    <source>
        <dbReference type="HAMAP-Rule" id="MF_00395"/>
    </source>
</evidence>
<accession>A8Y9F9</accession>
<feature type="chain" id="PRO_0000355448" description="Cytochrome b6-f complex subunit 8">
    <location>
        <begin position="1"/>
        <end position="29"/>
    </location>
</feature>
<feature type="transmembrane region" description="Helical" evidence="1">
    <location>
        <begin position="3"/>
        <end position="23"/>
    </location>
</feature>
<dbReference type="EMBL" id="AM777385">
    <property type="protein sequence ID" value="CAO85965.1"/>
    <property type="molecule type" value="Genomic_DNA"/>
</dbReference>
<dbReference type="RefSeq" id="YP_001531272.1">
    <property type="nucleotide sequence ID" value="NC_009950.1"/>
</dbReference>
<dbReference type="SMR" id="A8Y9F9"/>
<dbReference type="GeneID" id="5696549"/>
<dbReference type="KEGG" id="lper:5696549"/>
<dbReference type="GO" id="GO:0009535">
    <property type="term" value="C:chloroplast thylakoid membrane"/>
    <property type="evidence" value="ECO:0007669"/>
    <property type="project" value="UniProtKB-SubCell"/>
</dbReference>
<dbReference type="GO" id="GO:0009512">
    <property type="term" value="C:cytochrome b6f complex"/>
    <property type="evidence" value="ECO:0007669"/>
    <property type="project" value="InterPro"/>
</dbReference>
<dbReference type="GO" id="GO:0045158">
    <property type="term" value="F:electron transporter, transferring electrons within cytochrome b6/f complex of photosystem II activity"/>
    <property type="evidence" value="ECO:0007669"/>
    <property type="project" value="InterPro"/>
</dbReference>
<dbReference type="GO" id="GO:0017004">
    <property type="term" value="P:cytochrome complex assembly"/>
    <property type="evidence" value="ECO:0007669"/>
    <property type="project" value="UniProtKB-UniRule"/>
</dbReference>
<dbReference type="GO" id="GO:0015979">
    <property type="term" value="P:photosynthesis"/>
    <property type="evidence" value="ECO:0007669"/>
    <property type="project" value="UniProtKB-KW"/>
</dbReference>
<dbReference type="HAMAP" id="MF_00395">
    <property type="entry name" value="Cytb6_f_PetN"/>
    <property type="match status" value="1"/>
</dbReference>
<dbReference type="InterPro" id="IPR036143">
    <property type="entry name" value="Cytochr_b6-f_cplx_su8_sf"/>
</dbReference>
<dbReference type="InterPro" id="IPR005497">
    <property type="entry name" value="Cytochrome_b6-f_cplx_su8"/>
</dbReference>
<dbReference type="Pfam" id="PF03742">
    <property type="entry name" value="PetN"/>
    <property type="match status" value="1"/>
</dbReference>
<dbReference type="SUPFAM" id="SSF103451">
    <property type="entry name" value="PetN subunit of the cytochrome b6f complex"/>
    <property type="match status" value="1"/>
</dbReference>
<gene>
    <name evidence="1" type="primary">petN</name>
    <name type="ordered locus">LopeCp021</name>
</gene>
<protein>
    <recommendedName>
        <fullName evidence="1">Cytochrome b6-f complex subunit 8</fullName>
    </recommendedName>
    <alternativeName>
        <fullName evidence="1">Cytochrome b6-f complex subunit PetN</fullName>
    </alternativeName>
    <alternativeName>
        <fullName evidence="1">Cytochrome b6-f complex subunit VIII</fullName>
    </alternativeName>
</protein>
<sequence>MDIVSLAWAALMVVFTFSLSLVVWGRSGL</sequence>
<name>PETN_LOLPR</name>
<comment type="function">
    <text evidence="1">Component of the cytochrome b6-f complex, which mediates electron transfer between photosystem II (PSII) and photosystem I (PSI), cyclic electron flow around PSI, and state transitions.</text>
</comment>
<comment type="subunit">
    <text evidence="1">The 4 large subunits of the cytochrome b6-f complex are cytochrome b6, subunit IV (17 kDa polypeptide, PetD), cytochrome f and the Rieske protein, while the 4 small subunits are PetG, PetL, PetM and PetN. The complex functions as a dimer.</text>
</comment>
<comment type="subcellular location">
    <subcellularLocation>
        <location evidence="1">Plastid</location>
        <location evidence="1">Chloroplast thylakoid membrane</location>
        <topology evidence="1">Single-pass membrane protein</topology>
    </subcellularLocation>
</comment>
<comment type="similarity">
    <text evidence="1">Belongs to the PetN family.</text>
</comment>